<evidence type="ECO:0000255" key="1">
    <source>
        <dbReference type="HAMAP-Rule" id="MF_00023"/>
    </source>
</evidence>
<proteinExistence type="inferred from homology"/>
<reference key="1">
    <citation type="journal article" date="2007" name="J. Bacteriol.">
        <title>The genome sequence of avian pathogenic Escherichia coli strain O1:K1:H7 shares strong similarities with human extraintestinal pathogenic E. coli genomes.</title>
        <authorList>
            <person name="Johnson T.J."/>
            <person name="Kariyawasam S."/>
            <person name="Wannemuehler Y."/>
            <person name="Mangiamele P."/>
            <person name="Johnson S.J."/>
            <person name="Doetkott C."/>
            <person name="Skyberg J.A."/>
            <person name="Lynne A.M."/>
            <person name="Johnson J.R."/>
            <person name="Nolan L.K."/>
        </authorList>
    </citation>
    <scope>NUCLEOTIDE SEQUENCE [LARGE SCALE GENOMIC DNA]</scope>
</reference>
<protein>
    <recommendedName>
        <fullName evidence="1">SsrA-binding protein</fullName>
    </recommendedName>
    <alternativeName>
        <fullName evidence="1">Small protein B</fullName>
    </alternativeName>
</protein>
<gene>
    <name evidence="1" type="primary">smpB</name>
    <name type="ordered locus">Ecok1_25450</name>
    <name type="ORF">APECO1_3915</name>
</gene>
<dbReference type="EMBL" id="CP000468">
    <property type="protein sequence ID" value="ABJ02039.1"/>
    <property type="molecule type" value="Genomic_DNA"/>
</dbReference>
<dbReference type="RefSeq" id="WP_000162574.1">
    <property type="nucleotide sequence ID" value="NZ_CADILS010000033.1"/>
</dbReference>
<dbReference type="SMR" id="A1AEE9"/>
<dbReference type="GeneID" id="93774470"/>
<dbReference type="KEGG" id="ecv:APECO1_3915"/>
<dbReference type="HOGENOM" id="CLU_108953_3_0_6"/>
<dbReference type="PHI-base" id="PHI:4218"/>
<dbReference type="Proteomes" id="UP000008216">
    <property type="component" value="Chromosome"/>
</dbReference>
<dbReference type="GO" id="GO:0005829">
    <property type="term" value="C:cytosol"/>
    <property type="evidence" value="ECO:0007669"/>
    <property type="project" value="TreeGrafter"/>
</dbReference>
<dbReference type="GO" id="GO:0003723">
    <property type="term" value="F:RNA binding"/>
    <property type="evidence" value="ECO:0007669"/>
    <property type="project" value="UniProtKB-UniRule"/>
</dbReference>
<dbReference type="GO" id="GO:0070929">
    <property type="term" value="P:trans-translation"/>
    <property type="evidence" value="ECO:0007669"/>
    <property type="project" value="UniProtKB-UniRule"/>
</dbReference>
<dbReference type="CDD" id="cd09294">
    <property type="entry name" value="SmpB"/>
    <property type="match status" value="1"/>
</dbReference>
<dbReference type="FunFam" id="2.40.280.10:FF:000001">
    <property type="entry name" value="SsrA-binding protein"/>
    <property type="match status" value="1"/>
</dbReference>
<dbReference type="Gene3D" id="2.40.280.10">
    <property type="match status" value="1"/>
</dbReference>
<dbReference type="HAMAP" id="MF_00023">
    <property type="entry name" value="SmpB"/>
    <property type="match status" value="1"/>
</dbReference>
<dbReference type="InterPro" id="IPR023620">
    <property type="entry name" value="SmpB"/>
</dbReference>
<dbReference type="InterPro" id="IPR000037">
    <property type="entry name" value="SsrA-bd_prot"/>
</dbReference>
<dbReference type="InterPro" id="IPR020081">
    <property type="entry name" value="SsrA-bd_prot_CS"/>
</dbReference>
<dbReference type="NCBIfam" id="NF003843">
    <property type="entry name" value="PRK05422.1"/>
    <property type="match status" value="1"/>
</dbReference>
<dbReference type="NCBIfam" id="TIGR00086">
    <property type="entry name" value="smpB"/>
    <property type="match status" value="1"/>
</dbReference>
<dbReference type="PANTHER" id="PTHR30308:SF2">
    <property type="entry name" value="SSRA-BINDING PROTEIN"/>
    <property type="match status" value="1"/>
</dbReference>
<dbReference type="PANTHER" id="PTHR30308">
    <property type="entry name" value="TMRNA-BINDING COMPONENT OF TRANS-TRANSLATION TAGGING COMPLEX"/>
    <property type="match status" value="1"/>
</dbReference>
<dbReference type="Pfam" id="PF01668">
    <property type="entry name" value="SmpB"/>
    <property type="match status" value="1"/>
</dbReference>
<dbReference type="SUPFAM" id="SSF74982">
    <property type="entry name" value="Small protein B (SmpB)"/>
    <property type="match status" value="1"/>
</dbReference>
<dbReference type="PROSITE" id="PS01317">
    <property type="entry name" value="SSRP"/>
    <property type="match status" value="1"/>
</dbReference>
<comment type="function">
    <text evidence="1">Required for rescue of stalled ribosomes mediated by trans-translation. Binds to transfer-messenger RNA (tmRNA), required for stable association of tmRNA with ribosomes. tmRNA and SmpB together mimic tRNA shape, replacing the anticodon stem-loop with SmpB. tmRNA is encoded by the ssrA gene; the 2 termini fold to resemble tRNA(Ala) and it encodes a 'tag peptide', a short internal open reading frame. During trans-translation Ala-aminoacylated tmRNA acts like a tRNA, entering the A-site of stalled ribosomes, displacing the stalled mRNA. The ribosome then switches to translate the ORF on the tmRNA; the nascent peptide is terminated with the 'tag peptide' encoded by the tmRNA and targeted for degradation. The ribosome is freed to recommence translation, which seems to be the essential function of trans-translation.</text>
</comment>
<comment type="subcellular location">
    <subcellularLocation>
        <location evidence="1">Cytoplasm</location>
    </subcellularLocation>
    <text evidence="1">The tmRNA-SmpB complex associates with stalled 70S ribosomes.</text>
</comment>
<comment type="similarity">
    <text evidence="1">Belongs to the SmpB family.</text>
</comment>
<sequence>MTKKKAHKPGSATIALNKRARHEYFIEEEFEAGLALQGWEVKSLRAGKANISDSYVLLRDGEAFLFGANITPMAVASTHVVCDPTRTRKLLLNQRELDSLYGRVNREGYTVVALSLYWKNAWCKVKIGVAKGKKQHDKRSDIKEREWQVDKARIMKNAHR</sequence>
<feature type="chain" id="PRO_1000002046" description="SsrA-binding protein">
    <location>
        <begin position="1"/>
        <end position="160"/>
    </location>
</feature>
<keyword id="KW-0963">Cytoplasm</keyword>
<keyword id="KW-1185">Reference proteome</keyword>
<keyword id="KW-0694">RNA-binding</keyword>
<accession>A1AEE9</accession>
<name>SSRP_ECOK1</name>
<organism>
    <name type="scientific">Escherichia coli O1:K1 / APEC</name>
    <dbReference type="NCBI Taxonomy" id="405955"/>
    <lineage>
        <taxon>Bacteria</taxon>
        <taxon>Pseudomonadati</taxon>
        <taxon>Pseudomonadota</taxon>
        <taxon>Gammaproteobacteria</taxon>
        <taxon>Enterobacterales</taxon>
        <taxon>Enterobacteriaceae</taxon>
        <taxon>Escherichia</taxon>
    </lineage>
</organism>